<gene>
    <name evidence="1" type="primary">nadD</name>
    <name type="ordered locus">SACOL1650</name>
</gene>
<dbReference type="EC" id="2.7.7.18" evidence="1"/>
<dbReference type="EMBL" id="CP000046">
    <property type="protein sequence ID" value="AAW38266.1"/>
    <property type="molecule type" value="Genomic_DNA"/>
</dbReference>
<dbReference type="RefSeq" id="WP_000725162.1">
    <property type="nucleotide sequence ID" value="NZ_JBGOFO010000003.1"/>
</dbReference>
<dbReference type="PDB" id="2H29">
    <property type="method" value="X-ray"/>
    <property type="resolution" value="2.00 A"/>
    <property type="chains" value="A/B=1-189"/>
</dbReference>
<dbReference type="PDB" id="2H2A">
    <property type="method" value="X-ray"/>
    <property type="resolution" value="2.10 A"/>
    <property type="chains" value="A/B=1-189"/>
</dbReference>
<dbReference type="PDBsum" id="2H29"/>
<dbReference type="PDBsum" id="2H2A"/>
<dbReference type="SMR" id="Q5HFG7"/>
<dbReference type="KEGG" id="sac:SACOL1650"/>
<dbReference type="HOGENOM" id="CLU_069765_3_1_9"/>
<dbReference type="BRENDA" id="2.7.7.18">
    <property type="organism ID" value="3352"/>
</dbReference>
<dbReference type="UniPathway" id="UPA00253">
    <property type="reaction ID" value="UER00332"/>
</dbReference>
<dbReference type="EvolutionaryTrace" id="Q5HFG7"/>
<dbReference type="Proteomes" id="UP000000530">
    <property type="component" value="Chromosome"/>
</dbReference>
<dbReference type="GO" id="GO:0005524">
    <property type="term" value="F:ATP binding"/>
    <property type="evidence" value="ECO:0007669"/>
    <property type="project" value="UniProtKB-KW"/>
</dbReference>
<dbReference type="GO" id="GO:0004515">
    <property type="term" value="F:nicotinate-nucleotide adenylyltransferase activity"/>
    <property type="evidence" value="ECO:0007669"/>
    <property type="project" value="UniProtKB-UniRule"/>
</dbReference>
<dbReference type="GO" id="GO:0009435">
    <property type="term" value="P:NAD biosynthetic process"/>
    <property type="evidence" value="ECO:0007669"/>
    <property type="project" value="UniProtKB-UniRule"/>
</dbReference>
<dbReference type="CDD" id="cd02165">
    <property type="entry name" value="NMNAT"/>
    <property type="match status" value="1"/>
</dbReference>
<dbReference type="FunFam" id="3.40.50.620:FF:000189">
    <property type="entry name" value="Probable nicotinate-nucleotide adenylyltransferase"/>
    <property type="match status" value="1"/>
</dbReference>
<dbReference type="Gene3D" id="3.40.50.620">
    <property type="entry name" value="HUPs"/>
    <property type="match status" value="1"/>
</dbReference>
<dbReference type="HAMAP" id="MF_00244">
    <property type="entry name" value="NaMN_adenylyltr"/>
    <property type="match status" value="1"/>
</dbReference>
<dbReference type="InterPro" id="IPR004821">
    <property type="entry name" value="Cyt_trans-like"/>
</dbReference>
<dbReference type="InterPro" id="IPR005248">
    <property type="entry name" value="NadD/NMNAT"/>
</dbReference>
<dbReference type="InterPro" id="IPR014729">
    <property type="entry name" value="Rossmann-like_a/b/a_fold"/>
</dbReference>
<dbReference type="NCBIfam" id="TIGR00482">
    <property type="entry name" value="nicotinate (nicotinamide) nucleotide adenylyltransferase"/>
    <property type="match status" value="1"/>
</dbReference>
<dbReference type="NCBIfam" id="NF000840">
    <property type="entry name" value="PRK00071.1-3"/>
    <property type="match status" value="1"/>
</dbReference>
<dbReference type="NCBIfam" id="NF000841">
    <property type="entry name" value="PRK00071.1-4"/>
    <property type="match status" value="1"/>
</dbReference>
<dbReference type="PANTHER" id="PTHR39321">
    <property type="entry name" value="NICOTINATE-NUCLEOTIDE ADENYLYLTRANSFERASE-RELATED"/>
    <property type="match status" value="1"/>
</dbReference>
<dbReference type="PANTHER" id="PTHR39321:SF3">
    <property type="entry name" value="PHOSPHOPANTETHEINE ADENYLYLTRANSFERASE"/>
    <property type="match status" value="1"/>
</dbReference>
<dbReference type="Pfam" id="PF01467">
    <property type="entry name" value="CTP_transf_like"/>
    <property type="match status" value="1"/>
</dbReference>
<dbReference type="SUPFAM" id="SSF52374">
    <property type="entry name" value="Nucleotidylyl transferase"/>
    <property type="match status" value="1"/>
</dbReference>
<proteinExistence type="evidence at protein level"/>
<organism>
    <name type="scientific">Staphylococcus aureus (strain COL)</name>
    <dbReference type="NCBI Taxonomy" id="93062"/>
    <lineage>
        <taxon>Bacteria</taxon>
        <taxon>Bacillati</taxon>
        <taxon>Bacillota</taxon>
        <taxon>Bacilli</taxon>
        <taxon>Bacillales</taxon>
        <taxon>Staphylococcaceae</taxon>
        <taxon>Staphylococcus</taxon>
    </lineage>
</organism>
<reference key="1">
    <citation type="journal article" date="2005" name="J. Bacteriol.">
        <title>Insights on evolution of virulence and resistance from the complete genome analysis of an early methicillin-resistant Staphylococcus aureus strain and a biofilm-producing methicillin-resistant Staphylococcus epidermidis strain.</title>
        <authorList>
            <person name="Gill S.R."/>
            <person name="Fouts D.E."/>
            <person name="Archer G.L."/>
            <person name="Mongodin E.F."/>
            <person name="DeBoy R.T."/>
            <person name="Ravel J."/>
            <person name="Paulsen I.T."/>
            <person name="Kolonay J.F."/>
            <person name="Brinkac L.M."/>
            <person name="Beanan M.J."/>
            <person name="Dodson R.J."/>
            <person name="Daugherty S.C."/>
            <person name="Madupu R."/>
            <person name="Angiuoli S.V."/>
            <person name="Durkin A.S."/>
            <person name="Haft D.H."/>
            <person name="Vamathevan J.J."/>
            <person name="Khouri H."/>
            <person name="Utterback T.R."/>
            <person name="Lee C."/>
            <person name="Dimitrov G."/>
            <person name="Jiang L."/>
            <person name="Qin H."/>
            <person name="Weidman J."/>
            <person name="Tran K."/>
            <person name="Kang K.H."/>
            <person name="Hance I.R."/>
            <person name="Nelson K.E."/>
            <person name="Fraser C.M."/>
        </authorList>
    </citation>
    <scope>NUCLEOTIDE SEQUENCE [LARGE SCALE GENOMIC DNA]</scope>
    <source>
        <strain>COL</strain>
    </source>
</reference>
<accession>Q5HFG7</accession>
<keyword id="KW-0002">3D-structure</keyword>
<keyword id="KW-0067">ATP-binding</keyword>
<keyword id="KW-0520">NAD</keyword>
<keyword id="KW-0547">Nucleotide-binding</keyword>
<keyword id="KW-0548">Nucleotidyltransferase</keyword>
<keyword id="KW-0662">Pyridine nucleotide biosynthesis</keyword>
<keyword id="KW-0808">Transferase</keyword>
<sequence>MKKIVLYGGQFNPIHTAHMIVASEVFHELQPDEFYFLPSFMSPLKKHHDFIDVQHRLTMIQMIIDELGFGDICDDEIKRGGQSYTYDTIKAFKEQHKDSELYFVIGTDQYNQLEKWYQIEYLKEMVTFVVVNRDKNSQNVENAMIAIQIPRVDISSTMIRQRVSEGKSIQVLVPKSVENYIKGEGLYEH</sequence>
<name>NADD_STAAC</name>
<feature type="chain" id="PRO_0000181443" description="Probable nicotinate-nucleotide adenylyltransferase">
    <location>
        <begin position="1"/>
        <end position="189"/>
    </location>
</feature>
<feature type="strand" evidence="2">
    <location>
        <begin position="2"/>
        <end position="9"/>
    </location>
</feature>
<feature type="helix" evidence="2">
    <location>
        <begin position="16"/>
        <end position="29"/>
    </location>
</feature>
<feature type="strand" evidence="2">
    <location>
        <begin position="32"/>
        <end position="38"/>
    </location>
</feature>
<feature type="helix" evidence="2">
    <location>
        <begin position="54"/>
        <end position="67"/>
    </location>
</feature>
<feature type="helix" evidence="2">
    <location>
        <begin position="75"/>
        <end position="79"/>
    </location>
</feature>
<feature type="helix" evidence="2">
    <location>
        <begin position="85"/>
        <end position="95"/>
    </location>
</feature>
<feature type="strand" evidence="2">
    <location>
        <begin position="99"/>
        <end position="106"/>
    </location>
</feature>
<feature type="helix" evidence="2">
    <location>
        <begin position="107"/>
        <end position="110"/>
    </location>
</feature>
<feature type="helix" evidence="2">
    <location>
        <begin position="111"/>
        <end position="115"/>
    </location>
</feature>
<feature type="helix" evidence="2">
    <location>
        <begin position="119"/>
        <end position="125"/>
    </location>
</feature>
<feature type="strand" evidence="2">
    <location>
        <begin position="127"/>
        <end position="131"/>
    </location>
</feature>
<feature type="strand" evidence="2">
    <location>
        <begin position="134"/>
        <end position="136"/>
    </location>
</feature>
<feature type="strand" evidence="2">
    <location>
        <begin position="144"/>
        <end position="147"/>
    </location>
</feature>
<feature type="helix" evidence="2">
    <location>
        <begin position="156"/>
        <end position="164"/>
    </location>
</feature>
<feature type="helix" evidence="2">
    <location>
        <begin position="175"/>
        <end position="184"/>
    </location>
</feature>
<feature type="turn" evidence="2">
    <location>
        <begin position="185"/>
        <end position="187"/>
    </location>
</feature>
<protein>
    <recommendedName>
        <fullName evidence="1">Probable nicotinate-nucleotide adenylyltransferase</fullName>
        <ecNumber evidence="1">2.7.7.18</ecNumber>
    </recommendedName>
    <alternativeName>
        <fullName evidence="1">Deamido-NAD(+) diphosphorylase</fullName>
    </alternativeName>
    <alternativeName>
        <fullName evidence="1">Deamido-NAD(+) pyrophosphorylase</fullName>
    </alternativeName>
    <alternativeName>
        <fullName evidence="1">Nicotinate mononucleotide adenylyltransferase</fullName>
        <shortName evidence="1">NaMN adenylyltransferase</shortName>
    </alternativeName>
</protein>
<evidence type="ECO:0000255" key="1">
    <source>
        <dbReference type="HAMAP-Rule" id="MF_00244"/>
    </source>
</evidence>
<evidence type="ECO:0007829" key="2">
    <source>
        <dbReference type="PDB" id="2H29"/>
    </source>
</evidence>
<comment type="function">
    <text evidence="1">Catalyzes the reversible adenylation of nicotinate mononucleotide (NaMN) to nicotinic acid adenine dinucleotide (NaAD).</text>
</comment>
<comment type="catalytic activity">
    <reaction evidence="1">
        <text>nicotinate beta-D-ribonucleotide + ATP + H(+) = deamido-NAD(+) + diphosphate</text>
        <dbReference type="Rhea" id="RHEA:22860"/>
        <dbReference type="ChEBI" id="CHEBI:15378"/>
        <dbReference type="ChEBI" id="CHEBI:30616"/>
        <dbReference type="ChEBI" id="CHEBI:33019"/>
        <dbReference type="ChEBI" id="CHEBI:57502"/>
        <dbReference type="ChEBI" id="CHEBI:58437"/>
        <dbReference type="EC" id="2.7.7.18"/>
    </reaction>
</comment>
<comment type="pathway">
    <text evidence="1">Cofactor biosynthesis; NAD(+) biosynthesis; deamido-NAD(+) from nicotinate D-ribonucleotide: step 1/1.</text>
</comment>
<comment type="similarity">
    <text evidence="1">Belongs to the NadD family.</text>
</comment>